<organism>
    <name type="scientific">Histophilus somni (strain 129Pt)</name>
    <name type="common">Haemophilus somnus</name>
    <dbReference type="NCBI Taxonomy" id="205914"/>
    <lineage>
        <taxon>Bacteria</taxon>
        <taxon>Pseudomonadati</taxon>
        <taxon>Pseudomonadota</taxon>
        <taxon>Gammaproteobacteria</taxon>
        <taxon>Pasteurellales</taxon>
        <taxon>Pasteurellaceae</taxon>
        <taxon>Histophilus</taxon>
    </lineage>
</organism>
<proteinExistence type="inferred from homology"/>
<feature type="chain" id="PRO_0000313259" description="DNA ligase">
    <location>
        <begin position="1"/>
        <end position="673"/>
    </location>
</feature>
<feature type="domain" description="BRCT" evidence="1">
    <location>
        <begin position="596"/>
        <end position="673"/>
    </location>
</feature>
<feature type="active site" description="N6-AMP-lysine intermediate" evidence="1">
    <location>
        <position position="120"/>
    </location>
</feature>
<feature type="binding site" evidence="1">
    <location>
        <begin position="36"/>
        <end position="40"/>
    </location>
    <ligand>
        <name>NAD(+)</name>
        <dbReference type="ChEBI" id="CHEBI:57540"/>
    </ligand>
</feature>
<feature type="binding site" evidence="1">
    <location>
        <begin position="85"/>
        <end position="86"/>
    </location>
    <ligand>
        <name>NAD(+)</name>
        <dbReference type="ChEBI" id="CHEBI:57540"/>
    </ligand>
</feature>
<feature type="binding site" evidence="1">
    <location>
        <position position="118"/>
    </location>
    <ligand>
        <name>NAD(+)</name>
        <dbReference type="ChEBI" id="CHEBI:57540"/>
    </ligand>
</feature>
<feature type="binding site" evidence="1">
    <location>
        <position position="141"/>
    </location>
    <ligand>
        <name>NAD(+)</name>
        <dbReference type="ChEBI" id="CHEBI:57540"/>
    </ligand>
</feature>
<feature type="binding site" evidence="1">
    <location>
        <position position="178"/>
    </location>
    <ligand>
        <name>NAD(+)</name>
        <dbReference type="ChEBI" id="CHEBI:57540"/>
    </ligand>
</feature>
<feature type="binding site" evidence="1">
    <location>
        <position position="295"/>
    </location>
    <ligand>
        <name>NAD(+)</name>
        <dbReference type="ChEBI" id="CHEBI:57540"/>
    </ligand>
</feature>
<feature type="binding site" evidence="1">
    <location>
        <position position="319"/>
    </location>
    <ligand>
        <name>NAD(+)</name>
        <dbReference type="ChEBI" id="CHEBI:57540"/>
    </ligand>
</feature>
<feature type="binding site" evidence="1">
    <location>
        <position position="413"/>
    </location>
    <ligand>
        <name>Zn(2+)</name>
        <dbReference type="ChEBI" id="CHEBI:29105"/>
    </ligand>
</feature>
<feature type="binding site" evidence="1">
    <location>
        <position position="416"/>
    </location>
    <ligand>
        <name>Zn(2+)</name>
        <dbReference type="ChEBI" id="CHEBI:29105"/>
    </ligand>
</feature>
<feature type="binding site" evidence="1">
    <location>
        <position position="431"/>
    </location>
    <ligand>
        <name>Zn(2+)</name>
        <dbReference type="ChEBI" id="CHEBI:29105"/>
    </ligand>
</feature>
<feature type="binding site" evidence="1">
    <location>
        <position position="437"/>
    </location>
    <ligand>
        <name>Zn(2+)</name>
        <dbReference type="ChEBI" id="CHEBI:29105"/>
    </ligand>
</feature>
<dbReference type="EC" id="6.5.1.2" evidence="1"/>
<dbReference type="EMBL" id="CP000436">
    <property type="protein sequence ID" value="ABI24655.1"/>
    <property type="molecule type" value="Genomic_DNA"/>
</dbReference>
<dbReference type="SMR" id="Q0I2H6"/>
<dbReference type="KEGG" id="hso:HS_0377"/>
<dbReference type="eggNOG" id="COG0272">
    <property type="taxonomic scope" value="Bacteria"/>
</dbReference>
<dbReference type="HOGENOM" id="CLU_007764_2_1_6"/>
<dbReference type="GO" id="GO:0005829">
    <property type="term" value="C:cytosol"/>
    <property type="evidence" value="ECO:0007669"/>
    <property type="project" value="TreeGrafter"/>
</dbReference>
<dbReference type="GO" id="GO:0003677">
    <property type="term" value="F:DNA binding"/>
    <property type="evidence" value="ECO:0007669"/>
    <property type="project" value="InterPro"/>
</dbReference>
<dbReference type="GO" id="GO:0003911">
    <property type="term" value="F:DNA ligase (NAD+) activity"/>
    <property type="evidence" value="ECO:0007669"/>
    <property type="project" value="UniProtKB-UniRule"/>
</dbReference>
<dbReference type="GO" id="GO:0046872">
    <property type="term" value="F:metal ion binding"/>
    <property type="evidence" value="ECO:0007669"/>
    <property type="project" value="UniProtKB-KW"/>
</dbReference>
<dbReference type="GO" id="GO:0006281">
    <property type="term" value="P:DNA repair"/>
    <property type="evidence" value="ECO:0007669"/>
    <property type="project" value="UniProtKB-KW"/>
</dbReference>
<dbReference type="GO" id="GO:0006260">
    <property type="term" value="P:DNA replication"/>
    <property type="evidence" value="ECO:0007669"/>
    <property type="project" value="UniProtKB-KW"/>
</dbReference>
<dbReference type="CDD" id="cd17748">
    <property type="entry name" value="BRCT_DNA_ligase_like"/>
    <property type="match status" value="1"/>
</dbReference>
<dbReference type="CDD" id="cd00114">
    <property type="entry name" value="LIGANc"/>
    <property type="match status" value="1"/>
</dbReference>
<dbReference type="FunFam" id="1.10.150.20:FF:000006">
    <property type="entry name" value="DNA ligase"/>
    <property type="match status" value="1"/>
</dbReference>
<dbReference type="FunFam" id="1.10.150.20:FF:000007">
    <property type="entry name" value="DNA ligase"/>
    <property type="match status" value="1"/>
</dbReference>
<dbReference type="FunFam" id="1.10.287.610:FF:000002">
    <property type="entry name" value="DNA ligase"/>
    <property type="match status" value="1"/>
</dbReference>
<dbReference type="FunFam" id="2.40.50.140:FF:000012">
    <property type="entry name" value="DNA ligase"/>
    <property type="match status" value="1"/>
</dbReference>
<dbReference type="FunFam" id="3.30.470.30:FF:000001">
    <property type="entry name" value="DNA ligase"/>
    <property type="match status" value="1"/>
</dbReference>
<dbReference type="FunFam" id="6.20.10.30:FF:000001">
    <property type="entry name" value="DNA ligase"/>
    <property type="match status" value="1"/>
</dbReference>
<dbReference type="Gene3D" id="6.20.10.30">
    <property type="match status" value="1"/>
</dbReference>
<dbReference type="Gene3D" id="1.10.150.20">
    <property type="entry name" value="5' to 3' exonuclease, C-terminal subdomain"/>
    <property type="match status" value="2"/>
</dbReference>
<dbReference type="Gene3D" id="3.40.50.10190">
    <property type="entry name" value="BRCT domain"/>
    <property type="match status" value="1"/>
</dbReference>
<dbReference type="Gene3D" id="3.30.470.30">
    <property type="entry name" value="DNA ligase/mRNA capping enzyme"/>
    <property type="match status" value="1"/>
</dbReference>
<dbReference type="Gene3D" id="1.10.287.610">
    <property type="entry name" value="Helix hairpin bin"/>
    <property type="match status" value="1"/>
</dbReference>
<dbReference type="Gene3D" id="2.40.50.140">
    <property type="entry name" value="Nucleic acid-binding proteins"/>
    <property type="match status" value="1"/>
</dbReference>
<dbReference type="HAMAP" id="MF_01588">
    <property type="entry name" value="DNA_ligase_A"/>
    <property type="match status" value="1"/>
</dbReference>
<dbReference type="InterPro" id="IPR001357">
    <property type="entry name" value="BRCT_dom"/>
</dbReference>
<dbReference type="InterPro" id="IPR036420">
    <property type="entry name" value="BRCT_dom_sf"/>
</dbReference>
<dbReference type="InterPro" id="IPR041663">
    <property type="entry name" value="DisA/LigA_HHH"/>
</dbReference>
<dbReference type="InterPro" id="IPR001679">
    <property type="entry name" value="DNA_ligase"/>
</dbReference>
<dbReference type="InterPro" id="IPR018239">
    <property type="entry name" value="DNA_ligase_AS"/>
</dbReference>
<dbReference type="InterPro" id="IPR033136">
    <property type="entry name" value="DNA_ligase_CS"/>
</dbReference>
<dbReference type="InterPro" id="IPR013839">
    <property type="entry name" value="DNAligase_adenylation"/>
</dbReference>
<dbReference type="InterPro" id="IPR013840">
    <property type="entry name" value="DNAligase_N"/>
</dbReference>
<dbReference type="InterPro" id="IPR003583">
    <property type="entry name" value="Hlx-hairpin-Hlx_DNA-bd_motif"/>
</dbReference>
<dbReference type="InterPro" id="IPR012340">
    <property type="entry name" value="NA-bd_OB-fold"/>
</dbReference>
<dbReference type="InterPro" id="IPR004150">
    <property type="entry name" value="NAD_DNA_ligase_OB"/>
</dbReference>
<dbReference type="InterPro" id="IPR010994">
    <property type="entry name" value="RuvA_2-like"/>
</dbReference>
<dbReference type="InterPro" id="IPR004149">
    <property type="entry name" value="Znf_DNAligase_C4"/>
</dbReference>
<dbReference type="NCBIfam" id="TIGR00575">
    <property type="entry name" value="dnlj"/>
    <property type="match status" value="1"/>
</dbReference>
<dbReference type="NCBIfam" id="NF005932">
    <property type="entry name" value="PRK07956.1"/>
    <property type="match status" value="1"/>
</dbReference>
<dbReference type="PANTHER" id="PTHR23389">
    <property type="entry name" value="CHROMOSOME TRANSMISSION FIDELITY FACTOR 18"/>
    <property type="match status" value="1"/>
</dbReference>
<dbReference type="PANTHER" id="PTHR23389:SF9">
    <property type="entry name" value="DNA LIGASE"/>
    <property type="match status" value="1"/>
</dbReference>
<dbReference type="Pfam" id="PF00533">
    <property type="entry name" value="BRCT"/>
    <property type="match status" value="1"/>
</dbReference>
<dbReference type="Pfam" id="PF01653">
    <property type="entry name" value="DNA_ligase_aden"/>
    <property type="match status" value="1"/>
</dbReference>
<dbReference type="Pfam" id="PF03120">
    <property type="entry name" value="DNA_ligase_OB"/>
    <property type="match status" value="1"/>
</dbReference>
<dbReference type="Pfam" id="PF03119">
    <property type="entry name" value="DNA_ligase_ZBD"/>
    <property type="match status" value="1"/>
</dbReference>
<dbReference type="Pfam" id="PF12826">
    <property type="entry name" value="HHH_2"/>
    <property type="match status" value="1"/>
</dbReference>
<dbReference type="Pfam" id="PF14520">
    <property type="entry name" value="HHH_5"/>
    <property type="match status" value="1"/>
</dbReference>
<dbReference type="Pfam" id="PF22745">
    <property type="entry name" value="Nlig-Ia"/>
    <property type="match status" value="1"/>
</dbReference>
<dbReference type="PIRSF" id="PIRSF001604">
    <property type="entry name" value="LigA"/>
    <property type="match status" value="1"/>
</dbReference>
<dbReference type="SMART" id="SM00292">
    <property type="entry name" value="BRCT"/>
    <property type="match status" value="1"/>
</dbReference>
<dbReference type="SMART" id="SM00278">
    <property type="entry name" value="HhH1"/>
    <property type="match status" value="4"/>
</dbReference>
<dbReference type="SMART" id="SM00532">
    <property type="entry name" value="LIGANc"/>
    <property type="match status" value="1"/>
</dbReference>
<dbReference type="SUPFAM" id="SSF52113">
    <property type="entry name" value="BRCT domain"/>
    <property type="match status" value="1"/>
</dbReference>
<dbReference type="SUPFAM" id="SSF56091">
    <property type="entry name" value="DNA ligase/mRNA capping enzyme, catalytic domain"/>
    <property type="match status" value="1"/>
</dbReference>
<dbReference type="SUPFAM" id="SSF50249">
    <property type="entry name" value="Nucleic acid-binding proteins"/>
    <property type="match status" value="1"/>
</dbReference>
<dbReference type="SUPFAM" id="SSF47781">
    <property type="entry name" value="RuvA domain 2-like"/>
    <property type="match status" value="1"/>
</dbReference>
<dbReference type="PROSITE" id="PS50172">
    <property type="entry name" value="BRCT"/>
    <property type="match status" value="1"/>
</dbReference>
<dbReference type="PROSITE" id="PS01055">
    <property type="entry name" value="DNA_LIGASE_N1"/>
    <property type="match status" value="1"/>
</dbReference>
<dbReference type="PROSITE" id="PS01056">
    <property type="entry name" value="DNA_LIGASE_N2"/>
    <property type="match status" value="1"/>
</dbReference>
<gene>
    <name evidence="1" type="primary">ligA</name>
    <name type="ordered locus">HS_0377</name>
</gene>
<sequence length="673" mass="74560">MKQGIFMIKQQIEELRQLLRHHEYQYHVLDNPQIPDSEYDRLFHQLKALEQQYPEYASENSPTQRVGAKPLSNFAQVKHDIPMLSLDNAFSDEDFFAFVKRIQDRLIHVHHSLTFCCEPKLDGLAVSILYINGQLVQAATRGDGTTGEDITANIRTIRNIPLQLLTDNPPARLEVRGEVFMSQAGFEKLNKTALAKGEKTFANPRNAAAGSLRQLDPKITGQRPLMLNAYGIGIAEGVELPDTHFARLQWLKSIGIPVNNEIQLCHGIEKVLDFYRTIKQKRSSLGYDIDGTVLKINDIDLQQQLGFISKAPRWAIAYKFPAQEELTILNNVEFQVGRTGAITPVAKLEPVFVAGVTVSNATLHNGDEIARLDIAIGDTVIVRRAGDVIPQIIGVLHERRPENAKSIIFPSNCPVCDSVISKIEGEAVARCTGGLICAAQRKEALKHFVSRKAMDIDGIGAKLIEQLVERELVHTPADLFKLDQVTLMRLERMGAKSAENALASLAKAKKTTLARFIFALGIREVGETTALNLATHFKTLEAFENATFEQLQKVQDVGEVVAKRIRSFWSEPHNVAVVKDLIAQGIHWDDVEVKEVRDNPLKGKTVVLTGTLTKMGRSEAKEYLLQLGCKVSGSVSSKTDFVIAGESAGSKLTKATELGINILSENEFLALLA</sequence>
<comment type="function">
    <text evidence="1">DNA ligase that catalyzes the formation of phosphodiester linkages between 5'-phosphoryl and 3'-hydroxyl groups in double-stranded DNA using NAD as a coenzyme and as the energy source for the reaction. It is essential for DNA replication and repair of damaged DNA.</text>
</comment>
<comment type="catalytic activity">
    <reaction evidence="1">
        <text>NAD(+) + (deoxyribonucleotide)n-3'-hydroxyl + 5'-phospho-(deoxyribonucleotide)m = (deoxyribonucleotide)n+m + AMP + beta-nicotinamide D-nucleotide.</text>
        <dbReference type="EC" id="6.5.1.2"/>
    </reaction>
</comment>
<comment type="cofactor">
    <cofactor evidence="1">
        <name>Mg(2+)</name>
        <dbReference type="ChEBI" id="CHEBI:18420"/>
    </cofactor>
    <cofactor evidence="1">
        <name>Mn(2+)</name>
        <dbReference type="ChEBI" id="CHEBI:29035"/>
    </cofactor>
</comment>
<comment type="similarity">
    <text evidence="1">Belongs to the NAD-dependent DNA ligase family. LigA subfamily.</text>
</comment>
<name>DNLJ_HISS1</name>
<evidence type="ECO:0000255" key="1">
    <source>
        <dbReference type="HAMAP-Rule" id="MF_01588"/>
    </source>
</evidence>
<reference key="1">
    <citation type="journal article" date="2007" name="J. Bacteriol.">
        <title>Complete genome sequence of Haemophilus somnus (Histophilus somni) strain 129Pt and comparison to Haemophilus ducreyi 35000HP and Haemophilus influenzae Rd.</title>
        <authorList>
            <person name="Challacombe J.F."/>
            <person name="Duncan A.J."/>
            <person name="Brettin T.S."/>
            <person name="Bruce D."/>
            <person name="Chertkov O."/>
            <person name="Detter J.C."/>
            <person name="Han C.S."/>
            <person name="Misra M."/>
            <person name="Richardson P."/>
            <person name="Tapia R."/>
            <person name="Thayer N."/>
            <person name="Xie G."/>
            <person name="Inzana T.J."/>
        </authorList>
    </citation>
    <scope>NUCLEOTIDE SEQUENCE [LARGE SCALE GENOMIC DNA]</scope>
    <source>
        <strain>129Pt</strain>
    </source>
</reference>
<accession>Q0I2H6</accession>
<keyword id="KW-0227">DNA damage</keyword>
<keyword id="KW-0234">DNA repair</keyword>
<keyword id="KW-0235">DNA replication</keyword>
<keyword id="KW-0436">Ligase</keyword>
<keyword id="KW-0460">Magnesium</keyword>
<keyword id="KW-0464">Manganese</keyword>
<keyword id="KW-0479">Metal-binding</keyword>
<keyword id="KW-0520">NAD</keyword>
<keyword id="KW-0862">Zinc</keyword>
<protein>
    <recommendedName>
        <fullName evidence="1">DNA ligase</fullName>
        <ecNumber evidence="1">6.5.1.2</ecNumber>
    </recommendedName>
    <alternativeName>
        <fullName evidence="1">Polydeoxyribonucleotide synthase [NAD(+)]</fullName>
    </alternativeName>
</protein>